<name>SKP_VIBCH</name>
<accession>Q9KPW1</accession>
<organism>
    <name type="scientific">Vibrio cholerae serotype O1 (strain ATCC 39315 / El Tor Inaba N16961)</name>
    <dbReference type="NCBI Taxonomy" id="243277"/>
    <lineage>
        <taxon>Bacteria</taxon>
        <taxon>Pseudomonadati</taxon>
        <taxon>Pseudomonadota</taxon>
        <taxon>Gammaproteobacteria</taxon>
        <taxon>Vibrionales</taxon>
        <taxon>Vibrionaceae</taxon>
        <taxon>Vibrio</taxon>
    </lineage>
</organism>
<sequence>MKNMIKAASLGLIILSSSMMANAAEAAQKIGYINTAQVFQALPQREVVLQKMQEEFKDKAAELQAIQADAKTKIEKLKRDGQLMGQDEVEKLRIEIGQLDSKYKIKAQALEQASARREAEEKQKLFKVIQDAVKKVAEKEGYDIVLDTSSMQYGKPEHNLSEKVIKAIK</sequence>
<reference key="1">
    <citation type="journal article" date="2000" name="Nature">
        <title>DNA sequence of both chromosomes of the cholera pathogen Vibrio cholerae.</title>
        <authorList>
            <person name="Heidelberg J.F."/>
            <person name="Eisen J.A."/>
            <person name="Nelson W.C."/>
            <person name="Clayton R.A."/>
            <person name="Gwinn M.L."/>
            <person name="Dodson R.J."/>
            <person name="Haft D.H."/>
            <person name="Hickey E.K."/>
            <person name="Peterson J.D."/>
            <person name="Umayam L.A."/>
            <person name="Gill S.R."/>
            <person name="Nelson K.E."/>
            <person name="Read T.D."/>
            <person name="Tettelin H."/>
            <person name="Richardson D.L."/>
            <person name="Ermolaeva M.D."/>
            <person name="Vamathevan J.J."/>
            <person name="Bass S."/>
            <person name="Qin H."/>
            <person name="Dragoi I."/>
            <person name="Sellers P."/>
            <person name="McDonald L.A."/>
            <person name="Utterback T.R."/>
            <person name="Fleischmann R.D."/>
            <person name="Nierman W.C."/>
            <person name="White O."/>
            <person name="Salzberg S.L."/>
            <person name="Smith H.O."/>
            <person name="Colwell R.R."/>
            <person name="Mekalanos J.J."/>
            <person name="Venter J.C."/>
            <person name="Fraser C.M."/>
        </authorList>
    </citation>
    <scope>NUCLEOTIDE SEQUENCE [LARGE SCALE GENOMIC DNA]</scope>
    <source>
        <strain>ATCC 39315 / El Tor Inaba N16961</strain>
    </source>
</reference>
<proteinExistence type="inferred from homology"/>
<dbReference type="EMBL" id="AE003852">
    <property type="protein sequence ID" value="AAF95395.1"/>
    <property type="molecule type" value="Genomic_DNA"/>
</dbReference>
<dbReference type="PIR" id="A82099">
    <property type="entry name" value="A82099"/>
</dbReference>
<dbReference type="RefSeq" id="NP_231882.1">
    <property type="nucleotide sequence ID" value="NC_002505.1"/>
</dbReference>
<dbReference type="RefSeq" id="WP_000794125.1">
    <property type="nucleotide sequence ID" value="NZ_LT906614.1"/>
</dbReference>
<dbReference type="SMR" id="Q9KPW1"/>
<dbReference type="STRING" id="243277.VC_2251"/>
<dbReference type="EnsemblBacteria" id="AAF95395">
    <property type="protein sequence ID" value="AAF95395"/>
    <property type="gene ID" value="VC_2251"/>
</dbReference>
<dbReference type="KEGG" id="vch:VC_2251"/>
<dbReference type="PATRIC" id="fig|243277.26.peg.2147"/>
<dbReference type="eggNOG" id="COG2825">
    <property type="taxonomic scope" value="Bacteria"/>
</dbReference>
<dbReference type="HOGENOM" id="CLU_101388_2_1_6"/>
<dbReference type="Proteomes" id="UP000000584">
    <property type="component" value="Chromosome 1"/>
</dbReference>
<dbReference type="GO" id="GO:0042597">
    <property type="term" value="C:periplasmic space"/>
    <property type="evidence" value="ECO:0007669"/>
    <property type="project" value="UniProtKB-SubCell"/>
</dbReference>
<dbReference type="GO" id="GO:0051082">
    <property type="term" value="F:unfolded protein binding"/>
    <property type="evidence" value="ECO:0007669"/>
    <property type="project" value="InterPro"/>
</dbReference>
<dbReference type="GO" id="GO:0061077">
    <property type="term" value="P:chaperone-mediated protein folding"/>
    <property type="evidence" value="ECO:0000318"/>
    <property type="project" value="GO_Central"/>
</dbReference>
<dbReference type="GO" id="GO:0050821">
    <property type="term" value="P:protein stabilization"/>
    <property type="evidence" value="ECO:0000318"/>
    <property type="project" value="GO_Central"/>
</dbReference>
<dbReference type="Gene3D" id="3.30.910.20">
    <property type="entry name" value="Skp domain"/>
    <property type="match status" value="1"/>
</dbReference>
<dbReference type="InterPro" id="IPR005632">
    <property type="entry name" value="Chaperone_Skp"/>
</dbReference>
<dbReference type="InterPro" id="IPR024930">
    <property type="entry name" value="Skp_dom_sf"/>
</dbReference>
<dbReference type="PANTHER" id="PTHR35089">
    <property type="entry name" value="CHAPERONE PROTEIN SKP"/>
    <property type="match status" value="1"/>
</dbReference>
<dbReference type="PANTHER" id="PTHR35089:SF1">
    <property type="entry name" value="CHAPERONE PROTEIN SKP"/>
    <property type="match status" value="1"/>
</dbReference>
<dbReference type="Pfam" id="PF03938">
    <property type="entry name" value="OmpH"/>
    <property type="match status" value="1"/>
</dbReference>
<dbReference type="PIRSF" id="PIRSF002094">
    <property type="entry name" value="OMP26_Skp"/>
    <property type="match status" value="1"/>
</dbReference>
<dbReference type="SMART" id="SM00935">
    <property type="entry name" value="OmpH"/>
    <property type="match status" value="1"/>
</dbReference>
<dbReference type="SUPFAM" id="SSF111384">
    <property type="entry name" value="OmpH-like"/>
    <property type="match status" value="1"/>
</dbReference>
<evidence type="ECO:0000250" key="1"/>
<evidence type="ECO:0000255" key="2"/>
<evidence type="ECO:0000305" key="3"/>
<protein>
    <recommendedName>
        <fullName>Chaperone protein Skp</fullName>
    </recommendedName>
</protein>
<gene>
    <name type="primary">skp</name>
    <name type="synonym">ompH</name>
    <name type="ordered locus">VC_2251</name>
</gene>
<keyword id="KW-0143">Chaperone</keyword>
<keyword id="KW-0574">Periplasm</keyword>
<keyword id="KW-1185">Reference proteome</keyword>
<keyword id="KW-0732">Signal</keyword>
<feature type="signal peptide" evidence="2">
    <location>
        <begin position="1"/>
        <end position="23"/>
    </location>
</feature>
<feature type="chain" id="PRO_0000020179" description="Chaperone protein Skp">
    <location>
        <begin position="24"/>
        <end position="169"/>
    </location>
</feature>
<comment type="function">
    <text evidence="1">Molecular chaperone that interacts specifically with outer membrane proteins, thus maintaining the solubility of early folding intermediates during passage through the periplasm.</text>
</comment>
<comment type="subunit">
    <text evidence="1">Homotrimer.</text>
</comment>
<comment type="subcellular location">
    <subcellularLocation>
        <location evidence="1">Periplasm</location>
    </subcellularLocation>
</comment>
<comment type="similarity">
    <text evidence="3">Belongs to the Skp family.</text>
</comment>